<name>WDR55_DROPE</name>
<proteinExistence type="inferred from homology"/>
<sequence>MHTHNNFKTPSDADELDDLDDDMVIGVIEEIAQEALVGEDVSDSDIDEHDLADVGAPEHNQNADENESISSDSSFDPNAEDSSDSDDSMLEEDEAEGASSGEATSAKRRKDDNDGPCGSAADSAAVDLDDLDDETDETVRAIIAAIKKPRSAPPEIKLEDFITDVCFHPDRDIIALATIIGDVHLYEYGNEGNKLLRTIEVHSKACRDVEFTEDGRYLLTASKDKCVMVTDLETEKLKKLYETAHDDAINKLHVLDENLFATGDDAGTVKLWDLRTKNPIFELKEVEDQITQMITNDQKKLLLATSADGYLTTFNIAARKLYVQSEPYEEELNCMGIYRGSSKLVVGTSKGKLYSYNWGYFGYHCDMYPGIKSPVSLMIPITDRIACVAGEDGNIRACHITPYRNLGVVGQHNMPIESLDINTSGELLASSSHNNDVRFWNVKYFEDFGDIKYNDKHNAYKEKRHNLPSSKCTNASDFFSDLTKEDEDNADNNDAAAGPSNSA</sequence>
<reference key="1">
    <citation type="journal article" date="2007" name="Nature">
        <title>Evolution of genes and genomes on the Drosophila phylogeny.</title>
        <authorList>
            <consortium name="Drosophila 12 genomes consortium"/>
        </authorList>
    </citation>
    <scope>NUCLEOTIDE SEQUENCE [LARGE SCALE GENOMIC DNA]</scope>
    <source>
        <strain>MSH-3 / Tucson 14011-0111.49</strain>
    </source>
</reference>
<gene>
    <name type="ORF">GL12389</name>
</gene>
<comment type="similarity">
    <text evidence="2">Belongs to the WD repeat WDR55 family.</text>
</comment>
<accession>B4GMG4</accession>
<dbReference type="EMBL" id="CH479185">
    <property type="protein sequence ID" value="EDW38038.1"/>
    <property type="molecule type" value="Genomic_DNA"/>
</dbReference>
<dbReference type="SMR" id="B4GMG4"/>
<dbReference type="STRING" id="7234.B4GMG4"/>
<dbReference type="EnsemblMetazoa" id="FBtr0178004">
    <property type="protein sequence ID" value="FBpp0176496"/>
    <property type="gene ID" value="FBgn0149996"/>
</dbReference>
<dbReference type="EnsemblMetazoa" id="XM_002019368.2">
    <property type="protein sequence ID" value="XP_002019404.1"/>
    <property type="gene ID" value="LOC6594719"/>
</dbReference>
<dbReference type="GeneID" id="6594719"/>
<dbReference type="KEGG" id="dpe:6594719"/>
<dbReference type="eggNOG" id="KOG2444">
    <property type="taxonomic scope" value="Eukaryota"/>
</dbReference>
<dbReference type="HOGENOM" id="CLU_035848_1_0_1"/>
<dbReference type="OMA" id="QAIHPTE"/>
<dbReference type="OrthoDB" id="2288928at2759"/>
<dbReference type="PhylomeDB" id="B4GMG4"/>
<dbReference type="Proteomes" id="UP000008744">
    <property type="component" value="Unassembled WGS sequence"/>
</dbReference>
<dbReference type="GO" id="GO:0050829">
    <property type="term" value="P:defense response to Gram-negative bacterium"/>
    <property type="evidence" value="ECO:0007669"/>
    <property type="project" value="EnsemblMetazoa"/>
</dbReference>
<dbReference type="FunFam" id="2.130.10.10:FF:001280">
    <property type="entry name" value="WD repeat-containing protein 55 homolog"/>
    <property type="match status" value="1"/>
</dbReference>
<dbReference type="Gene3D" id="2.130.10.10">
    <property type="entry name" value="YVTN repeat-like/Quinoprotein amine dehydrogenase"/>
    <property type="match status" value="2"/>
</dbReference>
<dbReference type="InterPro" id="IPR015943">
    <property type="entry name" value="WD40/YVTN_repeat-like_dom_sf"/>
</dbReference>
<dbReference type="InterPro" id="IPR019775">
    <property type="entry name" value="WD40_repeat_CS"/>
</dbReference>
<dbReference type="InterPro" id="IPR036322">
    <property type="entry name" value="WD40_repeat_dom_sf"/>
</dbReference>
<dbReference type="InterPro" id="IPR001680">
    <property type="entry name" value="WD40_rpt"/>
</dbReference>
<dbReference type="InterPro" id="IPR050505">
    <property type="entry name" value="WDR55_POC1"/>
</dbReference>
<dbReference type="PANTHER" id="PTHR44019">
    <property type="entry name" value="WD REPEAT-CONTAINING PROTEIN 55"/>
    <property type="match status" value="1"/>
</dbReference>
<dbReference type="PANTHER" id="PTHR44019:SF20">
    <property type="entry name" value="WD REPEAT-CONTAINING PROTEIN 55"/>
    <property type="match status" value="1"/>
</dbReference>
<dbReference type="Pfam" id="PF24796">
    <property type="entry name" value="WDR55"/>
    <property type="match status" value="1"/>
</dbReference>
<dbReference type="SMART" id="SM00320">
    <property type="entry name" value="WD40"/>
    <property type="match status" value="5"/>
</dbReference>
<dbReference type="SUPFAM" id="SSF50978">
    <property type="entry name" value="WD40 repeat-like"/>
    <property type="match status" value="1"/>
</dbReference>
<dbReference type="PROSITE" id="PS00678">
    <property type="entry name" value="WD_REPEATS_1"/>
    <property type="match status" value="1"/>
</dbReference>
<dbReference type="PROSITE" id="PS50082">
    <property type="entry name" value="WD_REPEATS_2"/>
    <property type="match status" value="3"/>
</dbReference>
<dbReference type="PROSITE" id="PS50294">
    <property type="entry name" value="WD_REPEATS_REGION"/>
    <property type="match status" value="1"/>
</dbReference>
<protein>
    <recommendedName>
        <fullName>WD repeat-containing protein 55 homolog</fullName>
    </recommendedName>
</protein>
<feature type="chain" id="PRO_0000373963" description="WD repeat-containing protein 55 homolog">
    <location>
        <begin position="1"/>
        <end position="503"/>
    </location>
</feature>
<feature type="repeat" description="WD 1">
    <location>
        <begin position="157"/>
        <end position="196"/>
    </location>
</feature>
<feature type="repeat" description="WD 2">
    <location>
        <begin position="201"/>
        <end position="242"/>
    </location>
</feature>
<feature type="repeat" description="WD 3">
    <location>
        <begin position="244"/>
        <end position="282"/>
    </location>
</feature>
<feature type="repeat" description="WD 4">
    <location>
        <begin position="285"/>
        <end position="324"/>
    </location>
</feature>
<feature type="repeat" description="WD 5">
    <location>
        <begin position="327"/>
        <end position="366"/>
    </location>
</feature>
<feature type="repeat" description="WD 6">
    <location>
        <begin position="411"/>
        <end position="450"/>
    </location>
</feature>
<feature type="region of interest" description="Disordered" evidence="1">
    <location>
        <begin position="1"/>
        <end position="21"/>
    </location>
</feature>
<feature type="region of interest" description="Disordered" evidence="1">
    <location>
        <begin position="35"/>
        <end position="132"/>
    </location>
</feature>
<feature type="region of interest" description="Disordered" evidence="1">
    <location>
        <begin position="483"/>
        <end position="503"/>
    </location>
</feature>
<feature type="compositionally biased region" description="Acidic residues" evidence="1">
    <location>
        <begin position="12"/>
        <end position="21"/>
    </location>
</feature>
<feature type="compositionally biased region" description="Acidic residues" evidence="1">
    <location>
        <begin position="40"/>
        <end position="50"/>
    </location>
</feature>
<feature type="compositionally biased region" description="Acidic residues" evidence="1">
    <location>
        <begin position="78"/>
        <end position="96"/>
    </location>
</feature>
<evidence type="ECO:0000256" key="1">
    <source>
        <dbReference type="SAM" id="MobiDB-lite"/>
    </source>
</evidence>
<evidence type="ECO:0000305" key="2"/>
<organism>
    <name type="scientific">Drosophila persimilis</name>
    <name type="common">Fruit fly</name>
    <dbReference type="NCBI Taxonomy" id="7234"/>
    <lineage>
        <taxon>Eukaryota</taxon>
        <taxon>Metazoa</taxon>
        <taxon>Ecdysozoa</taxon>
        <taxon>Arthropoda</taxon>
        <taxon>Hexapoda</taxon>
        <taxon>Insecta</taxon>
        <taxon>Pterygota</taxon>
        <taxon>Neoptera</taxon>
        <taxon>Endopterygota</taxon>
        <taxon>Diptera</taxon>
        <taxon>Brachycera</taxon>
        <taxon>Muscomorpha</taxon>
        <taxon>Ephydroidea</taxon>
        <taxon>Drosophilidae</taxon>
        <taxon>Drosophila</taxon>
        <taxon>Sophophora</taxon>
    </lineage>
</organism>
<keyword id="KW-1185">Reference proteome</keyword>
<keyword id="KW-0677">Repeat</keyword>
<keyword id="KW-0853">WD repeat</keyword>